<keyword id="KW-0963">Cytoplasm</keyword>
<protein>
    <recommendedName>
        <fullName evidence="1">Regulatory protein RecX</fullName>
    </recommendedName>
</protein>
<feature type="chain" id="PRO_1000065202" description="Regulatory protein RecX">
    <location>
        <begin position="1"/>
        <end position="168"/>
    </location>
</feature>
<reference key="1">
    <citation type="submission" date="2007-09" db="EMBL/GenBank/DDBJ databases">
        <title>Complete sequence of chromosome of Serratia proteamaculans 568.</title>
        <authorList>
            <consortium name="US DOE Joint Genome Institute"/>
            <person name="Copeland A."/>
            <person name="Lucas S."/>
            <person name="Lapidus A."/>
            <person name="Barry K."/>
            <person name="Glavina del Rio T."/>
            <person name="Dalin E."/>
            <person name="Tice H."/>
            <person name="Pitluck S."/>
            <person name="Chain P."/>
            <person name="Malfatti S."/>
            <person name="Shin M."/>
            <person name="Vergez L."/>
            <person name="Schmutz J."/>
            <person name="Larimer F."/>
            <person name="Land M."/>
            <person name="Hauser L."/>
            <person name="Kyrpides N."/>
            <person name="Kim E."/>
            <person name="Taghavi S."/>
            <person name="Newman L."/>
            <person name="Vangronsveld J."/>
            <person name="van der Lelie D."/>
            <person name="Richardson P."/>
        </authorList>
    </citation>
    <scope>NUCLEOTIDE SEQUENCE [LARGE SCALE GENOMIC DNA]</scope>
    <source>
        <strain>568</strain>
    </source>
</reference>
<organism>
    <name type="scientific">Serratia proteamaculans (strain 568)</name>
    <dbReference type="NCBI Taxonomy" id="399741"/>
    <lineage>
        <taxon>Bacteria</taxon>
        <taxon>Pseudomonadati</taxon>
        <taxon>Pseudomonadota</taxon>
        <taxon>Gammaproteobacteria</taxon>
        <taxon>Enterobacterales</taxon>
        <taxon>Yersiniaceae</taxon>
        <taxon>Serratia</taxon>
    </lineage>
</organism>
<comment type="function">
    <text evidence="1">Modulates RecA activity.</text>
</comment>
<comment type="subcellular location">
    <subcellularLocation>
        <location evidence="1">Cytoplasm</location>
    </subcellularLocation>
</comment>
<comment type="similarity">
    <text evidence="1">Belongs to the RecX family.</text>
</comment>
<proteinExistence type="inferred from homology"/>
<gene>
    <name evidence="1" type="primary">recX</name>
    <name type="ordered locus">Spro_0842</name>
</gene>
<sequence length="168" mass="19552">MNDLLSRAMRLLSQRDHSEAELRRKLAAQPFMAKARFGTKTPSSSAPLPEEPVDPAVIEQVIAYCYQHNWLDDQRFARSYIGSRSRKGYGAQRIRSELMQKGVDKELTQAALADCEIDWCEQAKQVAQRKFGDQLPTDWKEKAKVQRYLLYRGFFQEEIQSIYRDFAQ</sequence>
<name>RECX_SERP5</name>
<dbReference type="EMBL" id="CP000826">
    <property type="protein sequence ID" value="ABV39948.1"/>
    <property type="molecule type" value="Genomic_DNA"/>
</dbReference>
<dbReference type="SMR" id="A8GA08"/>
<dbReference type="STRING" id="399741.Spro_0842"/>
<dbReference type="KEGG" id="spe:Spro_0842"/>
<dbReference type="eggNOG" id="COG2137">
    <property type="taxonomic scope" value="Bacteria"/>
</dbReference>
<dbReference type="HOGENOM" id="CLU_066607_3_2_6"/>
<dbReference type="OrthoDB" id="7066780at2"/>
<dbReference type="GO" id="GO:0005737">
    <property type="term" value="C:cytoplasm"/>
    <property type="evidence" value="ECO:0007669"/>
    <property type="project" value="UniProtKB-SubCell"/>
</dbReference>
<dbReference type="GO" id="GO:0006282">
    <property type="term" value="P:regulation of DNA repair"/>
    <property type="evidence" value="ECO:0007669"/>
    <property type="project" value="UniProtKB-UniRule"/>
</dbReference>
<dbReference type="Gene3D" id="1.10.10.10">
    <property type="entry name" value="Winged helix-like DNA-binding domain superfamily/Winged helix DNA-binding domain"/>
    <property type="match status" value="3"/>
</dbReference>
<dbReference type="HAMAP" id="MF_01114">
    <property type="entry name" value="RecX"/>
    <property type="match status" value="1"/>
</dbReference>
<dbReference type="InterPro" id="IPR053926">
    <property type="entry name" value="RecX_HTH_1st"/>
</dbReference>
<dbReference type="InterPro" id="IPR053924">
    <property type="entry name" value="RecX_HTH_2nd"/>
</dbReference>
<dbReference type="InterPro" id="IPR053925">
    <property type="entry name" value="RecX_HTH_3rd"/>
</dbReference>
<dbReference type="InterPro" id="IPR003783">
    <property type="entry name" value="Regulatory_RecX"/>
</dbReference>
<dbReference type="InterPro" id="IPR036388">
    <property type="entry name" value="WH-like_DNA-bd_sf"/>
</dbReference>
<dbReference type="NCBIfam" id="NF001053">
    <property type="entry name" value="PRK00117.1-3"/>
    <property type="match status" value="1"/>
</dbReference>
<dbReference type="PANTHER" id="PTHR33602">
    <property type="entry name" value="REGULATORY PROTEIN RECX FAMILY PROTEIN"/>
    <property type="match status" value="1"/>
</dbReference>
<dbReference type="PANTHER" id="PTHR33602:SF1">
    <property type="entry name" value="REGULATORY PROTEIN RECX FAMILY PROTEIN"/>
    <property type="match status" value="1"/>
</dbReference>
<dbReference type="Pfam" id="PF21982">
    <property type="entry name" value="RecX_HTH1"/>
    <property type="match status" value="1"/>
</dbReference>
<dbReference type="Pfam" id="PF02631">
    <property type="entry name" value="RecX_HTH2"/>
    <property type="match status" value="1"/>
</dbReference>
<dbReference type="Pfam" id="PF21981">
    <property type="entry name" value="RecX_HTH3"/>
    <property type="match status" value="1"/>
</dbReference>
<evidence type="ECO:0000255" key="1">
    <source>
        <dbReference type="HAMAP-Rule" id="MF_01114"/>
    </source>
</evidence>
<accession>A8GA08</accession>